<protein>
    <recommendedName>
        <fullName evidence="1">Anti-sigma F factor</fullName>
        <ecNumber evidence="1">2.7.11.1</ecNumber>
    </recommendedName>
    <alternativeName>
        <fullName evidence="1">Stage II sporulation protein AB</fullName>
    </alternativeName>
</protein>
<accession>Q731M3</accession>
<sequence>MRNEMNLQFSALSQNESFARVTVAAFIAQLDPTMEELTEIKTVVSEAVTNAIIHGYEGNAEGVVYISVILEEAMVKLTIRDEGIGIFNLDEARQPLFTTKPELERSGMGFTIMENFMDEVEVISNESFGTTIHLTKYLSNSNALCN</sequence>
<proteinExistence type="inferred from homology"/>
<gene>
    <name evidence="1" type="primary">spoIIAB</name>
    <name type="ordered locus">BCE_4143</name>
</gene>
<evidence type="ECO:0000255" key="1">
    <source>
        <dbReference type="HAMAP-Rule" id="MF_00637"/>
    </source>
</evidence>
<comment type="function">
    <text evidence="1">Binds to sigma F and blocks its ability to form an RNA polymerase holoenzyme (E-sigma F). Phosphorylates SpoIIAA on a serine residue. This phosphorylation may enable SpoIIAA to act as an anti-anti-sigma factor that counteracts SpoIIAB and thus releases sigma F from inhibition.</text>
</comment>
<comment type="catalytic activity">
    <reaction evidence="1">
        <text>L-seryl-[protein] + ATP = O-phospho-L-seryl-[protein] + ADP + H(+)</text>
        <dbReference type="Rhea" id="RHEA:17989"/>
        <dbReference type="Rhea" id="RHEA-COMP:9863"/>
        <dbReference type="Rhea" id="RHEA-COMP:11604"/>
        <dbReference type="ChEBI" id="CHEBI:15378"/>
        <dbReference type="ChEBI" id="CHEBI:29999"/>
        <dbReference type="ChEBI" id="CHEBI:30616"/>
        <dbReference type="ChEBI" id="CHEBI:83421"/>
        <dbReference type="ChEBI" id="CHEBI:456216"/>
        <dbReference type="EC" id="2.7.11.1"/>
    </reaction>
</comment>
<comment type="catalytic activity">
    <reaction evidence="1">
        <text>L-threonyl-[protein] + ATP = O-phospho-L-threonyl-[protein] + ADP + H(+)</text>
        <dbReference type="Rhea" id="RHEA:46608"/>
        <dbReference type="Rhea" id="RHEA-COMP:11060"/>
        <dbReference type="Rhea" id="RHEA-COMP:11605"/>
        <dbReference type="ChEBI" id="CHEBI:15378"/>
        <dbReference type="ChEBI" id="CHEBI:30013"/>
        <dbReference type="ChEBI" id="CHEBI:30616"/>
        <dbReference type="ChEBI" id="CHEBI:61977"/>
        <dbReference type="ChEBI" id="CHEBI:456216"/>
        <dbReference type="EC" id="2.7.11.1"/>
    </reaction>
</comment>
<comment type="similarity">
    <text evidence="1">Belongs to the anti-sigma-factor family.</text>
</comment>
<dbReference type="EC" id="2.7.11.1" evidence="1"/>
<dbReference type="EMBL" id="AE017194">
    <property type="protein sequence ID" value="AAS43044.1"/>
    <property type="molecule type" value="Genomic_DNA"/>
</dbReference>
<dbReference type="SMR" id="Q731M3"/>
<dbReference type="KEGG" id="bca:BCE_4143"/>
<dbReference type="HOGENOM" id="CLU_090336_11_0_9"/>
<dbReference type="Proteomes" id="UP000002527">
    <property type="component" value="Chromosome"/>
</dbReference>
<dbReference type="GO" id="GO:0005524">
    <property type="term" value="F:ATP binding"/>
    <property type="evidence" value="ECO:0007669"/>
    <property type="project" value="UniProtKB-KW"/>
</dbReference>
<dbReference type="GO" id="GO:0106310">
    <property type="term" value="F:protein serine kinase activity"/>
    <property type="evidence" value="ECO:0007669"/>
    <property type="project" value="RHEA"/>
</dbReference>
<dbReference type="GO" id="GO:0004674">
    <property type="term" value="F:protein serine/threonine kinase activity"/>
    <property type="evidence" value="ECO:0007669"/>
    <property type="project" value="UniProtKB-KW"/>
</dbReference>
<dbReference type="GO" id="GO:0016989">
    <property type="term" value="F:sigma factor antagonist activity"/>
    <property type="evidence" value="ECO:0007669"/>
    <property type="project" value="InterPro"/>
</dbReference>
<dbReference type="GO" id="GO:0030436">
    <property type="term" value="P:asexual sporulation"/>
    <property type="evidence" value="ECO:0007669"/>
    <property type="project" value="UniProtKB-UniRule"/>
</dbReference>
<dbReference type="GO" id="GO:0042174">
    <property type="term" value="P:negative regulation of sporulation resulting in formation of a cellular spore"/>
    <property type="evidence" value="ECO:0007669"/>
    <property type="project" value="InterPro"/>
</dbReference>
<dbReference type="GO" id="GO:0030435">
    <property type="term" value="P:sporulation resulting in formation of a cellular spore"/>
    <property type="evidence" value="ECO:0007669"/>
    <property type="project" value="UniProtKB-KW"/>
</dbReference>
<dbReference type="FunFam" id="3.30.565.10:FF:000022">
    <property type="entry name" value="Anti-sigma F factor"/>
    <property type="match status" value="1"/>
</dbReference>
<dbReference type="Gene3D" id="3.30.565.10">
    <property type="entry name" value="Histidine kinase-like ATPase, C-terminal domain"/>
    <property type="match status" value="1"/>
</dbReference>
<dbReference type="HAMAP" id="MF_00637">
    <property type="entry name" value="Anti_sigma_F"/>
    <property type="match status" value="1"/>
</dbReference>
<dbReference type="InterPro" id="IPR050267">
    <property type="entry name" value="Anti-sigma-factor_SerPK"/>
</dbReference>
<dbReference type="InterPro" id="IPR010194">
    <property type="entry name" value="Anti-sigma_F"/>
</dbReference>
<dbReference type="InterPro" id="IPR036890">
    <property type="entry name" value="HATPase_C_sf"/>
</dbReference>
<dbReference type="NCBIfam" id="TIGR01925">
    <property type="entry name" value="spIIAB"/>
    <property type="match status" value="1"/>
</dbReference>
<dbReference type="PANTHER" id="PTHR35526:SF3">
    <property type="entry name" value="ANTI-SIGMA-F FACTOR RSBW"/>
    <property type="match status" value="1"/>
</dbReference>
<dbReference type="PANTHER" id="PTHR35526">
    <property type="entry name" value="ANTI-SIGMA-F FACTOR RSBW-RELATED"/>
    <property type="match status" value="1"/>
</dbReference>
<dbReference type="Pfam" id="PF13581">
    <property type="entry name" value="HATPase_c_2"/>
    <property type="match status" value="1"/>
</dbReference>
<dbReference type="SMART" id="SM00387">
    <property type="entry name" value="HATPase_c"/>
    <property type="match status" value="1"/>
</dbReference>
<dbReference type="SUPFAM" id="SSF55874">
    <property type="entry name" value="ATPase domain of HSP90 chaperone/DNA topoisomerase II/histidine kinase"/>
    <property type="match status" value="1"/>
</dbReference>
<keyword id="KW-0067">ATP-binding</keyword>
<keyword id="KW-0418">Kinase</keyword>
<keyword id="KW-0547">Nucleotide-binding</keyword>
<keyword id="KW-0723">Serine/threonine-protein kinase</keyword>
<keyword id="KW-0749">Sporulation</keyword>
<keyword id="KW-0808">Transferase</keyword>
<organism>
    <name type="scientific">Bacillus cereus (strain ATCC 10987 / NRS 248)</name>
    <dbReference type="NCBI Taxonomy" id="222523"/>
    <lineage>
        <taxon>Bacteria</taxon>
        <taxon>Bacillati</taxon>
        <taxon>Bacillota</taxon>
        <taxon>Bacilli</taxon>
        <taxon>Bacillales</taxon>
        <taxon>Bacillaceae</taxon>
        <taxon>Bacillus</taxon>
        <taxon>Bacillus cereus group</taxon>
    </lineage>
</organism>
<feature type="chain" id="PRO_0000203549" description="Anti-sigma F factor">
    <location>
        <begin position="1"/>
        <end position="146"/>
    </location>
</feature>
<name>SP2AB_BACC1</name>
<reference key="1">
    <citation type="journal article" date="2004" name="Nucleic Acids Res.">
        <title>The genome sequence of Bacillus cereus ATCC 10987 reveals metabolic adaptations and a large plasmid related to Bacillus anthracis pXO1.</title>
        <authorList>
            <person name="Rasko D.A."/>
            <person name="Ravel J."/>
            <person name="Oekstad O.A."/>
            <person name="Helgason E."/>
            <person name="Cer R.Z."/>
            <person name="Jiang L."/>
            <person name="Shores K.A."/>
            <person name="Fouts D.E."/>
            <person name="Tourasse N.J."/>
            <person name="Angiuoli S.V."/>
            <person name="Kolonay J.F."/>
            <person name="Nelson W.C."/>
            <person name="Kolstoe A.-B."/>
            <person name="Fraser C.M."/>
            <person name="Read T.D."/>
        </authorList>
    </citation>
    <scope>NUCLEOTIDE SEQUENCE [LARGE SCALE GENOMIC DNA]</scope>
    <source>
        <strain>ATCC 10987 / NRS 248</strain>
    </source>
</reference>